<accession>Q0SYR5</accession>
<sequence length="538" mass="60836">MFRRNLITSAILLMAPLAFSAQSLAESLTVEQRLELLEKALRETQSELKKYKDEEKKKYTPATVNRSVSTNDQGYAANPFPTSSAAKPDAVLVKNEEKNASETGSIYSSMTLKDFSKFVKDEIGFSYNGYYRSGWGTASHGSPKSWAIGSLGRFGNEYSGWFDLQLKQRVYNENGKRVDAVVMIDGNVGQQYSTGWFGDNAGGENFMQFSDMYVTTKGFLPFAPEADFWVGKHGAPKIEIQMLDWKTQRTDAVTGVGLENWKVGPGKIDIALVREDVDDYDRSLQNKQQINTHTIDLRYKDIPLWDKATLMVSGRYVTANESASEKDNQDNNGYYDWKDTWMFGTSLTQKFDKGGFNEFSFLVANNSIARNFGRYAGASPFTTFNGRYYCDHTGGTAVRLTSQGEAYIGDHFIVANAIVYSFGNDIYSYETGAHSDFESIRAVVRPAYIWDQYNQTGVELGYFTQQNKDANSNKFNESGYKTTLFHTFKVNTSMLTSRLEIRFYATYIKALENELDGFTFEDNKDDQFAVGAQAEIWW</sequence>
<name>BGLH_SHIF8</name>
<comment type="function">
    <text evidence="3">May be a sugar porin with a broad carbohydrate specificity.</text>
</comment>
<comment type="subcellular location">
    <subcellularLocation>
        <location evidence="3">Cell outer membrane</location>
        <topology evidence="3">Multi-pass membrane protein</topology>
    </subcellularLocation>
</comment>
<comment type="similarity">
    <text evidence="3">Belongs to the porin LamB (TC 1.B.3) family.</text>
</comment>
<organism>
    <name type="scientific">Shigella flexneri serotype 5b (strain 8401)</name>
    <dbReference type="NCBI Taxonomy" id="373384"/>
    <lineage>
        <taxon>Bacteria</taxon>
        <taxon>Pseudomonadati</taxon>
        <taxon>Pseudomonadota</taxon>
        <taxon>Gammaproteobacteria</taxon>
        <taxon>Enterobacterales</taxon>
        <taxon>Enterobacteriaceae</taxon>
        <taxon>Shigella</taxon>
    </lineage>
</organism>
<gene>
    <name type="primary">bglH</name>
    <name type="ordered locus">SFV_3787</name>
</gene>
<proteinExistence type="inferred from homology"/>
<keyword id="KW-0998">Cell outer membrane</keyword>
<keyword id="KW-0406">Ion transport</keyword>
<keyword id="KW-0472">Membrane</keyword>
<keyword id="KW-0626">Porin</keyword>
<keyword id="KW-0732">Signal</keyword>
<keyword id="KW-0812">Transmembrane</keyword>
<keyword id="KW-1134">Transmembrane beta strand</keyword>
<keyword id="KW-0813">Transport</keyword>
<feature type="signal peptide" evidence="1">
    <location>
        <begin position="1"/>
        <end position="25"/>
    </location>
</feature>
<feature type="chain" id="PRO_0000355026" description="Putative outer membrane porin BglH">
    <location>
        <begin position="26"/>
        <end position="538"/>
    </location>
</feature>
<feature type="region of interest" description="Disordered" evidence="2">
    <location>
        <begin position="52"/>
        <end position="82"/>
    </location>
</feature>
<feature type="compositionally biased region" description="Polar residues" evidence="2">
    <location>
        <begin position="62"/>
        <end position="73"/>
    </location>
</feature>
<reference key="1">
    <citation type="journal article" date="2006" name="BMC Genomics">
        <title>Complete genome sequence of Shigella flexneri 5b and comparison with Shigella flexneri 2a.</title>
        <authorList>
            <person name="Nie H."/>
            <person name="Yang F."/>
            <person name="Zhang X."/>
            <person name="Yang J."/>
            <person name="Chen L."/>
            <person name="Wang J."/>
            <person name="Xiong Z."/>
            <person name="Peng J."/>
            <person name="Sun L."/>
            <person name="Dong J."/>
            <person name="Xue Y."/>
            <person name="Xu X."/>
            <person name="Chen S."/>
            <person name="Yao Z."/>
            <person name="Shen Y."/>
            <person name="Jin Q."/>
        </authorList>
    </citation>
    <scope>NUCLEOTIDE SEQUENCE [LARGE SCALE GENOMIC DNA]</scope>
    <source>
        <strain>8401</strain>
    </source>
</reference>
<protein>
    <recommendedName>
        <fullName>Putative outer membrane porin BglH</fullName>
    </recommendedName>
</protein>
<dbReference type="EMBL" id="CP000266">
    <property type="protein sequence ID" value="ABF05800.1"/>
    <property type="molecule type" value="Genomic_DNA"/>
</dbReference>
<dbReference type="RefSeq" id="WP_000489864.1">
    <property type="nucleotide sequence ID" value="NC_008258.1"/>
</dbReference>
<dbReference type="SMR" id="Q0SYR5"/>
<dbReference type="KEGG" id="sfv:SFV_3787"/>
<dbReference type="HOGENOM" id="CLU_032473_2_1_6"/>
<dbReference type="Proteomes" id="UP000000659">
    <property type="component" value="Chromosome"/>
</dbReference>
<dbReference type="GO" id="GO:0009279">
    <property type="term" value="C:cell outer membrane"/>
    <property type="evidence" value="ECO:0007669"/>
    <property type="project" value="UniProtKB-SubCell"/>
</dbReference>
<dbReference type="GO" id="GO:0046930">
    <property type="term" value="C:pore complex"/>
    <property type="evidence" value="ECO:0007669"/>
    <property type="project" value="UniProtKB-KW"/>
</dbReference>
<dbReference type="GO" id="GO:0015144">
    <property type="term" value="F:carbohydrate transmembrane transporter activity"/>
    <property type="evidence" value="ECO:0007669"/>
    <property type="project" value="TreeGrafter"/>
</dbReference>
<dbReference type="GO" id="GO:0015288">
    <property type="term" value="F:porin activity"/>
    <property type="evidence" value="ECO:0007669"/>
    <property type="project" value="UniProtKB-KW"/>
</dbReference>
<dbReference type="GO" id="GO:0006811">
    <property type="term" value="P:monoatomic ion transport"/>
    <property type="evidence" value="ECO:0007669"/>
    <property type="project" value="UniProtKB-KW"/>
</dbReference>
<dbReference type="GO" id="GO:0015774">
    <property type="term" value="P:polysaccharide transport"/>
    <property type="evidence" value="ECO:0007669"/>
    <property type="project" value="TreeGrafter"/>
</dbReference>
<dbReference type="CDD" id="cd01346">
    <property type="entry name" value="Maltoporin-like"/>
    <property type="match status" value="1"/>
</dbReference>
<dbReference type="Gene3D" id="2.40.170.10">
    <property type="entry name" value="Porin, LamB type"/>
    <property type="match status" value="1"/>
</dbReference>
<dbReference type="InterPro" id="IPR050286">
    <property type="entry name" value="G_neg_Bact_CarbUptk_Porin"/>
</dbReference>
<dbReference type="InterPro" id="IPR021570">
    <property type="entry name" value="LamB-type_porin_N_dom"/>
</dbReference>
<dbReference type="InterPro" id="IPR003192">
    <property type="entry name" value="Porin_LamB"/>
</dbReference>
<dbReference type="InterPro" id="IPR036998">
    <property type="entry name" value="Porin_LamB_sf"/>
</dbReference>
<dbReference type="PANTHER" id="PTHR38762">
    <property type="entry name" value="CRYPTIC OUTER MEMBRANE PORIN BGLH-RELATED"/>
    <property type="match status" value="1"/>
</dbReference>
<dbReference type="PANTHER" id="PTHR38762:SF1">
    <property type="entry name" value="CRYPTIC OUTER MEMBRANE PORIN BGLH-RELATED"/>
    <property type="match status" value="1"/>
</dbReference>
<dbReference type="Pfam" id="PF02264">
    <property type="entry name" value="LamB"/>
    <property type="match status" value="1"/>
</dbReference>
<dbReference type="Pfam" id="PF11471">
    <property type="entry name" value="Sugarporin_N"/>
    <property type="match status" value="1"/>
</dbReference>
<dbReference type="SUPFAM" id="SSF56935">
    <property type="entry name" value="Porins"/>
    <property type="match status" value="1"/>
</dbReference>
<evidence type="ECO:0000255" key="1"/>
<evidence type="ECO:0000256" key="2">
    <source>
        <dbReference type="SAM" id="MobiDB-lite"/>
    </source>
</evidence>
<evidence type="ECO:0000305" key="3"/>